<evidence type="ECO:0000255" key="1">
    <source>
        <dbReference type="HAMAP-Rule" id="MF_00532"/>
    </source>
</evidence>
<evidence type="ECO:0000305" key="2"/>
<comment type="similarity">
    <text evidence="1">Belongs to the universal ribosomal protein uS9 family.</text>
</comment>
<gene>
    <name evidence="1" type="primary">rpsI</name>
    <name type="ordered locus">Aflv_0139</name>
</gene>
<dbReference type="EMBL" id="CP000922">
    <property type="protein sequence ID" value="ACJ32523.1"/>
    <property type="molecule type" value="Genomic_DNA"/>
</dbReference>
<dbReference type="RefSeq" id="WP_003397701.1">
    <property type="nucleotide sequence ID" value="NC_011567.1"/>
</dbReference>
<dbReference type="SMR" id="B7GJ32"/>
<dbReference type="STRING" id="491915.Aflv_0139"/>
<dbReference type="GeneID" id="7036338"/>
<dbReference type="KEGG" id="afl:Aflv_0139"/>
<dbReference type="eggNOG" id="COG0103">
    <property type="taxonomic scope" value="Bacteria"/>
</dbReference>
<dbReference type="HOGENOM" id="CLU_046483_2_1_9"/>
<dbReference type="Proteomes" id="UP000000742">
    <property type="component" value="Chromosome"/>
</dbReference>
<dbReference type="GO" id="GO:0022627">
    <property type="term" value="C:cytosolic small ribosomal subunit"/>
    <property type="evidence" value="ECO:0007669"/>
    <property type="project" value="TreeGrafter"/>
</dbReference>
<dbReference type="GO" id="GO:0003723">
    <property type="term" value="F:RNA binding"/>
    <property type="evidence" value="ECO:0007669"/>
    <property type="project" value="TreeGrafter"/>
</dbReference>
<dbReference type="GO" id="GO:0003735">
    <property type="term" value="F:structural constituent of ribosome"/>
    <property type="evidence" value="ECO:0007669"/>
    <property type="project" value="InterPro"/>
</dbReference>
<dbReference type="GO" id="GO:0006412">
    <property type="term" value="P:translation"/>
    <property type="evidence" value="ECO:0007669"/>
    <property type="project" value="UniProtKB-UniRule"/>
</dbReference>
<dbReference type="FunFam" id="3.30.230.10:FF:000001">
    <property type="entry name" value="30S ribosomal protein S9"/>
    <property type="match status" value="1"/>
</dbReference>
<dbReference type="Gene3D" id="3.30.230.10">
    <property type="match status" value="1"/>
</dbReference>
<dbReference type="HAMAP" id="MF_00532_B">
    <property type="entry name" value="Ribosomal_uS9_B"/>
    <property type="match status" value="1"/>
</dbReference>
<dbReference type="InterPro" id="IPR020568">
    <property type="entry name" value="Ribosomal_Su5_D2-typ_SF"/>
</dbReference>
<dbReference type="InterPro" id="IPR000754">
    <property type="entry name" value="Ribosomal_uS9"/>
</dbReference>
<dbReference type="InterPro" id="IPR023035">
    <property type="entry name" value="Ribosomal_uS9_bac/plastid"/>
</dbReference>
<dbReference type="InterPro" id="IPR020574">
    <property type="entry name" value="Ribosomal_uS9_CS"/>
</dbReference>
<dbReference type="InterPro" id="IPR014721">
    <property type="entry name" value="Ribsml_uS5_D2-typ_fold_subgr"/>
</dbReference>
<dbReference type="NCBIfam" id="NF001099">
    <property type="entry name" value="PRK00132.1"/>
    <property type="match status" value="1"/>
</dbReference>
<dbReference type="PANTHER" id="PTHR21569">
    <property type="entry name" value="RIBOSOMAL PROTEIN S9"/>
    <property type="match status" value="1"/>
</dbReference>
<dbReference type="PANTHER" id="PTHR21569:SF1">
    <property type="entry name" value="SMALL RIBOSOMAL SUBUNIT PROTEIN US9M"/>
    <property type="match status" value="1"/>
</dbReference>
<dbReference type="Pfam" id="PF00380">
    <property type="entry name" value="Ribosomal_S9"/>
    <property type="match status" value="1"/>
</dbReference>
<dbReference type="SUPFAM" id="SSF54211">
    <property type="entry name" value="Ribosomal protein S5 domain 2-like"/>
    <property type="match status" value="1"/>
</dbReference>
<dbReference type="PROSITE" id="PS00360">
    <property type="entry name" value="RIBOSOMAL_S9"/>
    <property type="match status" value="1"/>
</dbReference>
<sequence>MAQVQYYGTGRRKSSVARVRLVPGEGRIIVNGRDIRDYVPYESLVEVVKQPLVLTETFGSYDVLVNVSGGGFTGQAGAIRHGIARALLQVDPEYRQTLKRAGLLTRDSRVKERKKYGLKGARRAPQFSKR</sequence>
<reference key="1">
    <citation type="journal article" date="2008" name="Genome Biol.">
        <title>Encapsulated in silica: genome, proteome and physiology of the thermophilic bacterium Anoxybacillus flavithermus WK1.</title>
        <authorList>
            <person name="Saw J.H."/>
            <person name="Mountain B.W."/>
            <person name="Feng L."/>
            <person name="Omelchenko M.V."/>
            <person name="Hou S."/>
            <person name="Saito J.A."/>
            <person name="Stott M.B."/>
            <person name="Li D."/>
            <person name="Zhao G."/>
            <person name="Wu J."/>
            <person name="Galperin M.Y."/>
            <person name="Koonin E.V."/>
            <person name="Makarova K.S."/>
            <person name="Wolf Y.I."/>
            <person name="Rigden D.J."/>
            <person name="Dunfield P.F."/>
            <person name="Wang L."/>
            <person name="Alam M."/>
        </authorList>
    </citation>
    <scope>NUCLEOTIDE SEQUENCE [LARGE SCALE GENOMIC DNA]</scope>
    <source>
        <strain>DSM 21510 / WK1</strain>
    </source>
</reference>
<protein>
    <recommendedName>
        <fullName evidence="1">Small ribosomal subunit protein uS9</fullName>
    </recommendedName>
    <alternativeName>
        <fullName evidence="2">30S ribosomal protein S9</fullName>
    </alternativeName>
</protein>
<keyword id="KW-0687">Ribonucleoprotein</keyword>
<keyword id="KW-0689">Ribosomal protein</keyword>
<name>RS9_ANOFW</name>
<feature type="chain" id="PRO_1000128071" description="Small ribosomal subunit protein uS9">
    <location>
        <begin position="1"/>
        <end position="130"/>
    </location>
</feature>
<organism>
    <name type="scientific">Anoxybacillus flavithermus (strain DSM 21510 / WK1)</name>
    <dbReference type="NCBI Taxonomy" id="491915"/>
    <lineage>
        <taxon>Bacteria</taxon>
        <taxon>Bacillati</taxon>
        <taxon>Bacillota</taxon>
        <taxon>Bacilli</taxon>
        <taxon>Bacillales</taxon>
        <taxon>Anoxybacillaceae</taxon>
        <taxon>Anoxybacillus</taxon>
    </lineage>
</organism>
<proteinExistence type="inferred from homology"/>
<accession>B7GJ32</accession>